<dbReference type="EC" id="3.6.5.3" evidence="2"/>
<dbReference type="EMBL" id="DP000238">
    <property type="protein sequence ID" value="ABK77041.1"/>
    <property type="molecule type" value="Genomic_DNA"/>
</dbReference>
<dbReference type="SMR" id="A0RUM4"/>
<dbReference type="STRING" id="414004.CENSYa_0406"/>
<dbReference type="EnsemblBacteria" id="ABK77041">
    <property type="protein sequence ID" value="ABK77041"/>
    <property type="gene ID" value="CENSYa_0406"/>
</dbReference>
<dbReference type="KEGG" id="csy:CENSYa_0406"/>
<dbReference type="PATRIC" id="fig|414004.10.peg.366"/>
<dbReference type="HOGENOM" id="CLU_007265_3_5_2"/>
<dbReference type="Proteomes" id="UP000000758">
    <property type="component" value="Chromosome"/>
</dbReference>
<dbReference type="GO" id="GO:0005737">
    <property type="term" value="C:cytoplasm"/>
    <property type="evidence" value="ECO:0007669"/>
    <property type="project" value="UniProtKB-SubCell"/>
</dbReference>
<dbReference type="GO" id="GO:0005525">
    <property type="term" value="F:GTP binding"/>
    <property type="evidence" value="ECO:0007669"/>
    <property type="project" value="UniProtKB-UniRule"/>
</dbReference>
<dbReference type="GO" id="GO:0003924">
    <property type="term" value="F:GTPase activity"/>
    <property type="evidence" value="ECO:0007669"/>
    <property type="project" value="InterPro"/>
</dbReference>
<dbReference type="GO" id="GO:0003746">
    <property type="term" value="F:translation elongation factor activity"/>
    <property type="evidence" value="ECO:0007669"/>
    <property type="project" value="UniProtKB-UniRule"/>
</dbReference>
<dbReference type="CDD" id="cd01883">
    <property type="entry name" value="EF1_alpha"/>
    <property type="match status" value="1"/>
</dbReference>
<dbReference type="CDD" id="cd03693">
    <property type="entry name" value="EF1_alpha_II"/>
    <property type="match status" value="1"/>
</dbReference>
<dbReference type="CDD" id="cd03705">
    <property type="entry name" value="EF1_alpha_III"/>
    <property type="match status" value="1"/>
</dbReference>
<dbReference type="FunFam" id="2.40.30.10:FF:000005">
    <property type="entry name" value="Elongation factor 1-alpha"/>
    <property type="match status" value="1"/>
</dbReference>
<dbReference type="FunFam" id="2.40.30.10:FF:000020">
    <property type="entry name" value="Translation elongation factor EF-1"/>
    <property type="match status" value="1"/>
</dbReference>
<dbReference type="FunFam" id="3.40.50.300:FF:000204">
    <property type="entry name" value="Translation elongation factor Tu"/>
    <property type="match status" value="1"/>
</dbReference>
<dbReference type="Gene3D" id="3.40.50.300">
    <property type="entry name" value="P-loop containing nucleotide triphosphate hydrolases"/>
    <property type="match status" value="1"/>
</dbReference>
<dbReference type="Gene3D" id="2.40.30.10">
    <property type="entry name" value="Translation factors"/>
    <property type="match status" value="2"/>
</dbReference>
<dbReference type="HAMAP" id="MF_00118_A">
    <property type="entry name" value="EF_Tu_A"/>
    <property type="match status" value="1"/>
</dbReference>
<dbReference type="InterPro" id="IPR004161">
    <property type="entry name" value="EFTu-like_2"/>
</dbReference>
<dbReference type="InterPro" id="IPR031157">
    <property type="entry name" value="G_TR_CS"/>
</dbReference>
<dbReference type="InterPro" id="IPR054696">
    <property type="entry name" value="GTP-eEF1A_C"/>
</dbReference>
<dbReference type="InterPro" id="IPR027417">
    <property type="entry name" value="P-loop_NTPase"/>
</dbReference>
<dbReference type="InterPro" id="IPR000795">
    <property type="entry name" value="T_Tr_GTP-bd_dom"/>
</dbReference>
<dbReference type="InterPro" id="IPR050100">
    <property type="entry name" value="TRAFAC_GTPase_members"/>
</dbReference>
<dbReference type="InterPro" id="IPR009000">
    <property type="entry name" value="Transl_B-barrel_sf"/>
</dbReference>
<dbReference type="InterPro" id="IPR009001">
    <property type="entry name" value="Transl_elong_EF1A/Init_IF2_C"/>
</dbReference>
<dbReference type="InterPro" id="IPR004539">
    <property type="entry name" value="Transl_elong_EF1A_euk/arc"/>
</dbReference>
<dbReference type="NCBIfam" id="TIGR00483">
    <property type="entry name" value="EF-1_alpha"/>
    <property type="match status" value="1"/>
</dbReference>
<dbReference type="NCBIfam" id="NF008969">
    <property type="entry name" value="PRK12317.1"/>
    <property type="match status" value="1"/>
</dbReference>
<dbReference type="PANTHER" id="PTHR23115">
    <property type="entry name" value="TRANSLATION FACTOR"/>
    <property type="match status" value="1"/>
</dbReference>
<dbReference type="Pfam" id="PF22594">
    <property type="entry name" value="GTP-eEF1A_C"/>
    <property type="match status" value="1"/>
</dbReference>
<dbReference type="Pfam" id="PF00009">
    <property type="entry name" value="GTP_EFTU"/>
    <property type="match status" value="1"/>
</dbReference>
<dbReference type="Pfam" id="PF03144">
    <property type="entry name" value="GTP_EFTU_D2"/>
    <property type="match status" value="1"/>
</dbReference>
<dbReference type="PRINTS" id="PR00315">
    <property type="entry name" value="ELONGATNFCT"/>
</dbReference>
<dbReference type="SUPFAM" id="SSF50465">
    <property type="entry name" value="EF-Tu/eEF-1alpha/eIF2-gamma C-terminal domain"/>
    <property type="match status" value="1"/>
</dbReference>
<dbReference type="SUPFAM" id="SSF52540">
    <property type="entry name" value="P-loop containing nucleoside triphosphate hydrolases"/>
    <property type="match status" value="1"/>
</dbReference>
<dbReference type="SUPFAM" id="SSF50447">
    <property type="entry name" value="Translation proteins"/>
    <property type="match status" value="1"/>
</dbReference>
<dbReference type="PROSITE" id="PS00301">
    <property type="entry name" value="G_TR_1"/>
    <property type="match status" value="1"/>
</dbReference>
<dbReference type="PROSITE" id="PS51722">
    <property type="entry name" value="G_TR_2"/>
    <property type="match status" value="1"/>
</dbReference>
<name>EF1A_CENSY</name>
<gene>
    <name evidence="2" type="primary">tuf</name>
    <name type="ordered locus">CENSYa_0406</name>
</gene>
<organism>
    <name type="scientific">Cenarchaeum symbiosum (strain A)</name>
    <dbReference type="NCBI Taxonomy" id="414004"/>
    <lineage>
        <taxon>Archaea</taxon>
        <taxon>Nitrososphaerota</taxon>
        <taxon>Candidatus Cenarchaeales</taxon>
        <taxon>Candidatus Cenarchaeaceae</taxon>
        <taxon>Candidatus Cenarchaeum</taxon>
    </lineage>
</organism>
<feature type="chain" id="PRO_0000337600" description="Elongation factor 1-alpha">
    <location>
        <begin position="1"/>
        <end position="436"/>
    </location>
</feature>
<feature type="domain" description="tr-type G">
    <location>
        <begin position="8"/>
        <end position="232"/>
    </location>
</feature>
<feature type="region of interest" description="G1" evidence="1">
    <location>
        <begin position="17"/>
        <end position="24"/>
    </location>
</feature>
<feature type="region of interest" description="G2" evidence="1">
    <location>
        <begin position="74"/>
        <end position="78"/>
    </location>
</feature>
<feature type="region of interest" description="G3" evidence="1">
    <location>
        <begin position="95"/>
        <end position="98"/>
    </location>
</feature>
<feature type="region of interest" description="G4" evidence="1">
    <location>
        <begin position="157"/>
        <end position="160"/>
    </location>
</feature>
<feature type="region of interest" description="G5" evidence="1">
    <location>
        <begin position="196"/>
        <end position="198"/>
    </location>
</feature>
<feature type="binding site" evidence="2">
    <location>
        <begin position="17"/>
        <end position="24"/>
    </location>
    <ligand>
        <name>GTP</name>
        <dbReference type="ChEBI" id="CHEBI:37565"/>
    </ligand>
</feature>
<feature type="binding site" evidence="2">
    <location>
        <position position="24"/>
    </location>
    <ligand>
        <name>Mg(2+)</name>
        <dbReference type="ChEBI" id="CHEBI:18420"/>
    </ligand>
</feature>
<feature type="binding site" evidence="2">
    <location>
        <begin position="95"/>
        <end position="99"/>
    </location>
    <ligand>
        <name>GTP</name>
        <dbReference type="ChEBI" id="CHEBI:37565"/>
    </ligand>
</feature>
<feature type="binding site" evidence="2">
    <location>
        <begin position="157"/>
        <end position="160"/>
    </location>
    <ligand>
        <name>GTP</name>
        <dbReference type="ChEBI" id="CHEBI:37565"/>
    </ligand>
</feature>
<comment type="function">
    <text evidence="2">GTP hydrolase that promotes the GTP-dependent binding of aminoacyl-tRNA to the A-site of ribosomes during protein biosynthesis.</text>
</comment>
<comment type="catalytic activity">
    <reaction evidence="2">
        <text>GTP + H2O = GDP + phosphate + H(+)</text>
        <dbReference type="Rhea" id="RHEA:19669"/>
        <dbReference type="ChEBI" id="CHEBI:15377"/>
        <dbReference type="ChEBI" id="CHEBI:15378"/>
        <dbReference type="ChEBI" id="CHEBI:37565"/>
        <dbReference type="ChEBI" id="CHEBI:43474"/>
        <dbReference type="ChEBI" id="CHEBI:58189"/>
        <dbReference type="EC" id="3.6.5.3"/>
    </reaction>
    <physiologicalReaction direction="left-to-right" evidence="2">
        <dbReference type="Rhea" id="RHEA:19670"/>
    </physiologicalReaction>
</comment>
<comment type="subcellular location">
    <subcellularLocation>
        <location evidence="2">Cytoplasm</location>
    </subcellularLocation>
</comment>
<comment type="similarity">
    <text evidence="2">Belongs to the TRAFAC class translation factor GTPase superfamily. Classic translation factor GTPase family. EF-Tu/EF-1A subfamily.</text>
</comment>
<keyword id="KW-0963">Cytoplasm</keyword>
<keyword id="KW-0251">Elongation factor</keyword>
<keyword id="KW-0342">GTP-binding</keyword>
<keyword id="KW-0378">Hydrolase</keyword>
<keyword id="KW-0460">Magnesium</keyword>
<keyword id="KW-0479">Metal-binding</keyword>
<keyword id="KW-0547">Nucleotide-binding</keyword>
<keyword id="KW-0648">Protein biosynthesis</keyword>
<keyword id="KW-1185">Reference proteome</keyword>
<reference key="1">
    <citation type="journal article" date="2006" name="Proc. Natl. Acad. Sci. U.S.A.">
        <title>Genomic analysis of the uncultivated marine crenarchaeote Cenarchaeum symbiosum.</title>
        <authorList>
            <person name="Hallam S.J."/>
            <person name="Konstantinidis K.T."/>
            <person name="Putnam N."/>
            <person name="Schleper C."/>
            <person name="Watanabe Y."/>
            <person name="Sugahara J."/>
            <person name="Preston C."/>
            <person name="de la Torre J."/>
            <person name="Richardson P.M."/>
            <person name="DeLong E.F."/>
        </authorList>
    </citation>
    <scope>NUCLEOTIDE SEQUENCE [LARGE SCALE GENOMIC DNA]</scope>
    <source>
        <strain>A</strain>
    </source>
</reference>
<protein>
    <recommendedName>
        <fullName evidence="2">Elongation factor 1-alpha</fullName>
        <shortName evidence="2">EF-1-alpha</shortName>
        <ecNumber evidence="2">3.6.5.3</ecNumber>
    </recommendedName>
    <alternativeName>
        <fullName evidence="2">Elongation factor Tu</fullName>
        <shortName evidence="2">EF-Tu</shortName>
    </alternativeName>
</protein>
<evidence type="ECO:0000250" key="1"/>
<evidence type="ECO:0000255" key="2">
    <source>
        <dbReference type="HAMAP-Rule" id="MF_00118"/>
    </source>
</evidence>
<sequence length="436" mass="47810">MTAHMADKPHLNMIVTGHIDNGKSTTMGHFLMDLGVVDERTIAQHAEESEKTGKGDTFKYAWVMDNIKDERERGITIDLAFQKFETPKYFFTLIDAPGHRDFIKNMITGASEADCAILVLSAKEGETDTAIAAGGQAREHAFLLKTLGVNQLIVAVNKMDDSKYSEEAYKKTVEKGEGLVKSVGYKLENVPFIPVSGWKGDNLVKRSENMPWYKGKTLLESFDDFKMAEKPVGKPLRVPIQDVYTITGVGTVPVGRVETGTMKPGDKIVVMPSGAQGEIKSIETHHTEMPSAEAGDNIGFNLRGIEKKDIKRGDVLGDPANPPKVAKEFLAQIIVIHHPTALAPGYTPVMHCHTAQVAAIMSEFVSKINPATGAVEEENPKFLKVGDSAIIKIRPVRPTPIETFKEFPEMGRFALRDMGATIAAGIVKEITEEHKV</sequence>
<accession>A0RUM4</accession>
<proteinExistence type="inferred from homology"/>